<protein>
    <recommendedName>
        <fullName>Protein MgtC</fullName>
    </recommendedName>
</protein>
<comment type="function">
    <text evidence="2 3">Virulence factor required for growth in low Mg(2+) medium and for intramacrophage survival. May be involved in regulating membrane potential by activating Na(+)/K(+)-ATPase.</text>
</comment>
<comment type="interaction">
    <interactant intactId="EBI-8772647">
        <id>D0ZLQ7</id>
    </interactant>
    <interactant intactId="EBI-8772730">
        <id>A0A0F6B941</id>
        <label>atpB</label>
    </interactant>
    <organismsDiffer>false</organismsDiffer>
    <experiments>5</experiments>
</comment>
<comment type="subcellular location">
    <subcellularLocation>
        <location evidence="4">Cell inner membrane</location>
        <topology evidence="4">Multi-pass membrane protein</topology>
    </subcellularLocation>
</comment>
<comment type="induction">
    <text evidence="2 3">Part of the mgtC/mgtB operon. Induced by low extracellular levels of Mg(2+). Transcriptionally regulated by extracellular magnesium via the two-component regulatory system PhoQ/PhoP.</text>
</comment>
<comment type="similarity">
    <text evidence="4">Belongs to the MgtC/SapB family.</text>
</comment>
<dbReference type="EMBL" id="AF106566">
    <property type="protein sequence ID" value="AAD16960.1"/>
    <property type="molecule type" value="Genomic_DNA"/>
</dbReference>
<dbReference type="EMBL" id="CP001363">
    <property type="protein sequence ID" value="ACY90919.1"/>
    <property type="molecule type" value="Genomic_DNA"/>
</dbReference>
<dbReference type="RefSeq" id="WP_000392694.1">
    <property type="nucleotide sequence ID" value="NZ_CP043402.1"/>
</dbReference>
<dbReference type="SMR" id="D0ZLQ7"/>
<dbReference type="IntAct" id="D0ZLQ7">
    <property type="interactions" value="7"/>
</dbReference>
<dbReference type="KEGG" id="seo:STM14_4538"/>
<dbReference type="PATRIC" id="fig|588858.6.peg.4138"/>
<dbReference type="HOGENOM" id="CLU_079292_0_0_6"/>
<dbReference type="BioCyc" id="SENT588858:STM14_RS19885-MONOMER"/>
<dbReference type="PHI-base" id="PHI:123167"/>
<dbReference type="PHI-base" id="PHI:3668"/>
<dbReference type="PHI-base" id="PHI:4693"/>
<dbReference type="PHI-base" id="PHI:4698"/>
<dbReference type="PHI-base" id="PHI:9435"/>
<dbReference type="Proteomes" id="UP000002695">
    <property type="component" value="Chromosome"/>
</dbReference>
<dbReference type="GO" id="GO:0005886">
    <property type="term" value="C:plasma membrane"/>
    <property type="evidence" value="ECO:0007669"/>
    <property type="project" value="UniProtKB-SubCell"/>
</dbReference>
<dbReference type="Gene3D" id="3.30.70.260">
    <property type="match status" value="1"/>
</dbReference>
<dbReference type="InterPro" id="IPR048640">
    <property type="entry name" value="MgtC-like_C"/>
</dbReference>
<dbReference type="InterPro" id="IPR003416">
    <property type="entry name" value="MgtC/SapB/SrpB/YhiD_fam"/>
</dbReference>
<dbReference type="InterPro" id="IPR049177">
    <property type="entry name" value="MgtC_SapB_SrpB_YhiD_N"/>
</dbReference>
<dbReference type="NCBIfam" id="NF011912">
    <property type="entry name" value="PRK15385.1"/>
    <property type="match status" value="1"/>
</dbReference>
<dbReference type="PANTHER" id="PTHR33778">
    <property type="entry name" value="PROTEIN MGTC"/>
    <property type="match status" value="1"/>
</dbReference>
<dbReference type="PANTHER" id="PTHR33778:SF3">
    <property type="entry name" value="PROTEIN MGTC"/>
    <property type="match status" value="1"/>
</dbReference>
<dbReference type="Pfam" id="PF02308">
    <property type="entry name" value="MgtC"/>
    <property type="match status" value="1"/>
</dbReference>
<dbReference type="Pfam" id="PF21770">
    <property type="entry name" value="MgtC_SapB_C"/>
    <property type="match status" value="1"/>
</dbReference>
<dbReference type="PRINTS" id="PR01837">
    <property type="entry name" value="MGTCSAPBPROT"/>
</dbReference>
<organism>
    <name type="scientific">Salmonella typhimurium (strain 14028s / SGSC 2262)</name>
    <dbReference type="NCBI Taxonomy" id="588858"/>
    <lineage>
        <taxon>Bacteria</taxon>
        <taxon>Pseudomonadati</taxon>
        <taxon>Pseudomonadota</taxon>
        <taxon>Gammaproteobacteria</taxon>
        <taxon>Enterobacterales</taxon>
        <taxon>Enterobacteriaceae</taxon>
        <taxon>Salmonella</taxon>
    </lineage>
</organism>
<sequence>MEERMLMFPYILNLLAAMLLGALIGAERQWRQRMAGLRTNALVATGAAVFILSSMTTSPDSPGRIAAQIVSGIGFLGAGVIMREGMNVRGLNTAATLWCSAGIGVLCGLGQFKNALAATIIILCANILLREAAQRINQLPISAEGEKRYILKVTCNKEDESAVRQWLLNIVKEAAICLQGLGSVPAQEQGYKEIRAELVGHADYRKTRELIISRIGDNDNITAIHWSIDSQ</sequence>
<keyword id="KW-0997">Cell inner membrane</keyword>
<keyword id="KW-1003">Cell membrane</keyword>
<keyword id="KW-0472">Membrane</keyword>
<keyword id="KW-0812">Transmembrane</keyword>
<keyword id="KW-1133">Transmembrane helix</keyword>
<keyword id="KW-0843">Virulence</keyword>
<evidence type="ECO:0000255" key="1"/>
<evidence type="ECO:0000269" key="2">
    <source>
    </source>
</evidence>
<evidence type="ECO:0000269" key="3">
    <source>
    </source>
</evidence>
<evidence type="ECO:0000305" key="4"/>
<feature type="chain" id="PRO_0000403462" description="Protein MgtC">
    <location>
        <begin position="1"/>
        <end position="231"/>
    </location>
</feature>
<feature type="transmembrane region" description="Helical" evidence="1">
    <location>
        <begin position="5"/>
        <end position="25"/>
    </location>
</feature>
<feature type="transmembrane region" description="Helical" evidence="1">
    <location>
        <begin position="39"/>
        <end position="59"/>
    </location>
</feature>
<feature type="transmembrane region" description="Helical" evidence="1">
    <location>
        <begin position="62"/>
        <end position="82"/>
    </location>
</feature>
<feature type="transmembrane region" description="Helical" evidence="1">
    <location>
        <begin position="103"/>
        <end position="123"/>
    </location>
</feature>
<accession>D0ZLQ7</accession>
<accession>P22037</accession>
<name>MGTC_SALT1</name>
<proteinExistence type="evidence at protein level"/>
<gene>
    <name type="primary">mgtC</name>
    <name type="ordered locus">STM14_4538</name>
</gene>
<reference key="1">
    <citation type="journal article" date="1999" name="J. Bacteriol.">
        <title>The SPI-3 pathogenicity island of Salmonella enterica.</title>
        <authorList>
            <person name="Blanc-Potard A.-B."/>
            <person name="Solomon F."/>
            <person name="Kayser J."/>
            <person name="Groisman E.A."/>
        </authorList>
    </citation>
    <scope>NUCLEOTIDE SEQUENCE [GENOMIC DNA]</scope>
    <source>
        <strain>ATCC 14028s / SGSG 2262</strain>
    </source>
</reference>
<reference key="2">
    <citation type="journal article" date="2010" name="J. Bacteriol.">
        <title>Short-term signatures of evolutionary change in the Salmonella enterica serovar typhimurium 14028 genome.</title>
        <authorList>
            <person name="Jarvik T."/>
            <person name="Smillie C."/>
            <person name="Groisman E.A."/>
            <person name="Ochman H."/>
        </authorList>
    </citation>
    <scope>NUCLEOTIDE SEQUENCE [LARGE SCALE GENOMIC DNA]</scope>
    <source>
        <strain>14028s / SGSC 2262</strain>
    </source>
</reference>
<reference key="3">
    <citation type="journal article" date="1997" name="EMBO J.">
        <title>The Salmonella selC locus contains a pathogenicity island mediating intramacrophage survival.</title>
        <authorList>
            <person name="Blanc-Potard A.-B."/>
            <person name="Groisman E.A."/>
        </authorList>
    </citation>
    <scope>FUNCTION</scope>
    <scope>INDUCTION</scope>
    <source>
        <strain>ATCC 14028s / SGSG 2262</strain>
    </source>
</reference>
<reference key="4">
    <citation type="journal article" date="1998" name="Infect. Immun.">
        <title>Magnesium and the role of MgtC in growth of Salmonella typhimurium.</title>
        <authorList>
            <person name="Moncrief M.B.C."/>
            <person name="Maguire M.E."/>
        </authorList>
    </citation>
    <scope>FUNCTION</scope>
    <scope>INDUCTION</scope>
    <source>
        <strain>ATCC 14028s / SGSG 2262</strain>
    </source>
</reference>